<gene>
    <name evidence="1" type="primary">atpF1</name>
    <name type="ordered locus">Atu0717</name>
    <name type="ORF">AGR_C_1301</name>
</gene>
<evidence type="ECO:0000255" key="1">
    <source>
        <dbReference type="HAMAP-Rule" id="MF_01398"/>
    </source>
</evidence>
<reference key="1">
    <citation type="journal article" date="2001" name="Science">
        <title>The genome of the natural genetic engineer Agrobacterium tumefaciens C58.</title>
        <authorList>
            <person name="Wood D.W."/>
            <person name="Setubal J.C."/>
            <person name="Kaul R."/>
            <person name="Monks D.E."/>
            <person name="Kitajima J.P."/>
            <person name="Okura V.K."/>
            <person name="Zhou Y."/>
            <person name="Chen L."/>
            <person name="Wood G.E."/>
            <person name="Almeida N.F. Jr."/>
            <person name="Woo L."/>
            <person name="Chen Y."/>
            <person name="Paulsen I.T."/>
            <person name="Eisen J.A."/>
            <person name="Karp P.D."/>
            <person name="Bovee D. Sr."/>
            <person name="Chapman P."/>
            <person name="Clendenning J."/>
            <person name="Deatherage G."/>
            <person name="Gillet W."/>
            <person name="Grant C."/>
            <person name="Kutyavin T."/>
            <person name="Levy R."/>
            <person name="Li M.-J."/>
            <person name="McClelland E."/>
            <person name="Palmieri A."/>
            <person name="Raymond C."/>
            <person name="Rouse G."/>
            <person name="Saenphimmachak C."/>
            <person name="Wu Z."/>
            <person name="Romero P."/>
            <person name="Gordon D."/>
            <person name="Zhang S."/>
            <person name="Yoo H."/>
            <person name="Tao Y."/>
            <person name="Biddle P."/>
            <person name="Jung M."/>
            <person name="Krespan W."/>
            <person name="Perry M."/>
            <person name="Gordon-Kamm B."/>
            <person name="Liao L."/>
            <person name="Kim S."/>
            <person name="Hendrick C."/>
            <person name="Zhao Z.-Y."/>
            <person name="Dolan M."/>
            <person name="Chumley F."/>
            <person name="Tingey S.V."/>
            <person name="Tomb J.-F."/>
            <person name="Gordon M.P."/>
            <person name="Olson M.V."/>
            <person name="Nester E.W."/>
        </authorList>
    </citation>
    <scope>NUCLEOTIDE SEQUENCE [LARGE SCALE GENOMIC DNA]</scope>
    <source>
        <strain>C58 / ATCC 33970</strain>
    </source>
</reference>
<reference key="2">
    <citation type="journal article" date="2001" name="Science">
        <title>Genome sequence of the plant pathogen and biotechnology agent Agrobacterium tumefaciens C58.</title>
        <authorList>
            <person name="Goodner B."/>
            <person name="Hinkle G."/>
            <person name="Gattung S."/>
            <person name="Miller N."/>
            <person name="Blanchard M."/>
            <person name="Qurollo B."/>
            <person name="Goldman B.S."/>
            <person name="Cao Y."/>
            <person name="Askenazi M."/>
            <person name="Halling C."/>
            <person name="Mullin L."/>
            <person name="Houmiel K."/>
            <person name="Gordon J."/>
            <person name="Vaudin M."/>
            <person name="Iartchouk O."/>
            <person name="Epp A."/>
            <person name="Liu F."/>
            <person name="Wollam C."/>
            <person name="Allinger M."/>
            <person name="Doughty D."/>
            <person name="Scott C."/>
            <person name="Lappas C."/>
            <person name="Markelz B."/>
            <person name="Flanagan C."/>
            <person name="Crowell C."/>
            <person name="Gurson J."/>
            <person name="Lomo C."/>
            <person name="Sear C."/>
            <person name="Strub G."/>
            <person name="Cielo C."/>
            <person name="Slater S."/>
        </authorList>
    </citation>
    <scope>NUCLEOTIDE SEQUENCE [LARGE SCALE GENOMIC DNA]</scope>
    <source>
        <strain>C58 / ATCC 33970</strain>
    </source>
</reference>
<sequence length="161" mass="17448">MAFDASFFALVGLVLFFVLIAYLKVPGMLSKSLDERAQNIQDELAEAKRLREEAQHLLAEYQRKRKEAEAEAAGIVAAAEREAAALTEEAKQKTEEFVARRTALSEQKIKQAEEDAIGAVRAAAVDIAIAASEKLLAEKTTAAAKAKLFAATIGEVKSKLN</sequence>
<keyword id="KW-0066">ATP synthesis</keyword>
<keyword id="KW-0997">Cell inner membrane</keyword>
<keyword id="KW-1003">Cell membrane</keyword>
<keyword id="KW-0138">CF(0)</keyword>
<keyword id="KW-0375">Hydrogen ion transport</keyword>
<keyword id="KW-0406">Ion transport</keyword>
<keyword id="KW-0472">Membrane</keyword>
<keyword id="KW-1185">Reference proteome</keyword>
<keyword id="KW-0812">Transmembrane</keyword>
<keyword id="KW-1133">Transmembrane helix</keyword>
<keyword id="KW-0813">Transport</keyword>
<feature type="chain" id="PRO_0000368301" description="ATP synthase subunit b 1">
    <location>
        <begin position="1"/>
        <end position="161"/>
    </location>
</feature>
<feature type="transmembrane region" description="Helical" evidence="1">
    <location>
        <begin position="3"/>
        <end position="23"/>
    </location>
</feature>
<accession>A9CK01</accession>
<organism>
    <name type="scientific">Agrobacterium fabrum (strain C58 / ATCC 33970)</name>
    <name type="common">Agrobacterium tumefaciens (strain C58)</name>
    <dbReference type="NCBI Taxonomy" id="176299"/>
    <lineage>
        <taxon>Bacteria</taxon>
        <taxon>Pseudomonadati</taxon>
        <taxon>Pseudomonadota</taxon>
        <taxon>Alphaproteobacteria</taxon>
        <taxon>Hyphomicrobiales</taxon>
        <taxon>Rhizobiaceae</taxon>
        <taxon>Rhizobium/Agrobacterium group</taxon>
        <taxon>Agrobacterium</taxon>
        <taxon>Agrobacterium tumefaciens complex</taxon>
    </lineage>
</organism>
<protein>
    <recommendedName>
        <fullName evidence="1">ATP synthase subunit b 1</fullName>
    </recommendedName>
    <alternativeName>
        <fullName evidence="1">ATP synthase F(0) sector subunit b 1</fullName>
    </alternativeName>
    <alternativeName>
        <fullName evidence="1">ATPase subunit I 1</fullName>
    </alternativeName>
    <alternativeName>
        <fullName evidence="1">F-type ATPase subunit b 1</fullName>
        <shortName evidence="1">F-ATPase subunit b 1</shortName>
    </alternativeName>
</protein>
<name>ATPF1_AGRFC</name>
<dbReference type="EMBL" id="AE007869">
    <property type="protein sequence ID" value="AAK86527.1"/>
    <property type="molecule type" value="Genomic_DNA"/>
</dbReference>
<dbReference type="PIR" id="AG2664">
    <property type="entry name" value="AG2664"/>
</dbReference>
<dbReference type="PIR" id="F97446">
    <property type="entry name" value="F97446"/>
</dbReference>
<dbReference type="RefSeq" id="NP_353742.1">
    <property type="nucleotide sequence ID" value="NC_003062.2"/>
</dbReference>
<dbReference type="RefSeq" id="WP_010971092.1">
    <property type="nucleotide sequence ID" value="NC_003062.2"/>
</dbReference>
<dbReference type="SMR" id="A9CK01"/>
<dbReference type="STRING" id="176299.Atu0717"/>
<dbReference type="EnsemblBacteria" id="AAK86527">
    <property type="protein sequence ID" value="AAK86527"/>
    <property type="gene ID" value="Atu0717"/>
</dbReference>
<dbReference type="GeneID" id="1132755"/>
<dbReference type="KEGG" id="atu:Atu0717"/>
<dbReference type="PATRIC" id="fig|176299.10.peg.715"/>
<dbReference type="eggNOG" id="COG0711">
    <property type="taxonomic scope" value="Bacteria"/>
</dbReference>
<dbReference type="HOGENOM" id="CLU_079215_6_1_5"/>
<dbReference type="BioCyc" id="AGRO:ATU0717-MONOMER"/>
<dbReference type="Proteomes" id="UP000000813">
    <property type="component" value="Chromosome circular"/>
</dbReference>
<dbReference type="GO" id="GO:0005886">
    <property type="term" value="C:plasma membrane"/>
    <property type="evidence" value="ECO:0007669"/>
    <property type="project" value="UniProtKB-SubCell"/>
</dbReference>
<dbReference type="GO" id="GO:0045259">
    <property type="term" value="C:proton-transporting ATP synthase complex"/>
    <property type="evidence" value="ECO:0007669"/>
    <property type="project" value="UniProtKB-KW"/>
</dbReference>
<dbReference type="GO" id="GO:0046933">
    <property type="term" value="F:proton-transporting ATP synthase activity, rotational mechanism"/>
    <property type="evidence" value="ECO:0007669"/>
    <property type="project" value="UniProtKB-UniRule"/>
</dbReference>
<dbReference type="GO" id="GO:0046961">
    <property type="term" value="F:proton-transporting ATPase activity, rotational mechanism"/>
    <property type="evidence" value="ECO:0007669"/>
    <property type="project" value="TreeGrafter"/>
</dbReference>
<dbReference type="CDD" id="cd06503">
    <property type="entry name" value="ATP-synt_Fo_b"/>
    <property type="match status" value="1"/>
</dbReference>
<dbReference type="HAMAP" id="MF_01398">
    <property type="entry name" value="ATP_synth_b_bprime"/>
    <property type="match status" value="1"/>
</dbReference>
<dbReference type="InterPro" id="IPR002146">
    <property type="entry name" value="ATP_synth_b/b'su_bac/chlpt"/>
</dbReference>
<dbReference type="InterPro" id="IPR050059">
    <property type="entry name" value="ATP_synthase_B_chain"/>
</dbReference>
<dbReference type="NCBIfam" id="NF006611">
    <property type="entry name" value="PRK09173.1"/>
    <property type="match status" value="1"/>
</dbReference>
<dbReference type="PANTHER" id="PTHR33445:SF1">
    <property type="entry name" value="ATP SYNTHASE SUBUNIT B"/>
    <property type="match status" value="1"/>
</dbReference>
<dbReference type="PANTHER" id="PTHR33445">
    <property type="entry name" value="ATP SYNTHASE SUBUNIT B', CHLOROPLASTIC"/>
    <property type="match status" value="1"/>
</dbReference>
<dbReference type="Pfam" id="PF00430">
    <property type="entry name" value="ATP-synt_B"/>
    <property type="match status" value="1"/>
</dbReference>
<proteinExistence type="inferred from homology"/>
<comment type="function">
    <text evidence="1">F(1)F(0) ATP synthase produces ATP from ADP in the presence of a proton or sodium gradient. F-type ATPases consist of two structural domains, F(1) containing the extramembraneous catalytic core and F(0) containing the membrane proton channel, linked together by a central stalk and a peripheral stalk. During catalysis, ATP synthesis in the catalytic domain of F(1) is coupled via a rotary mechanism of the central stalk subunits to proton translocation.</text>
</comment>
<comment type="function">
    <text evidence="1">Component of the F(0) channel, it forms part of the peripheral stalk, linking F(1) to F(0).</text>
</comment>
<comment type="subunit">
    <text evidence="1">F-type ATPases have 2 components, F(1) - the catalytic core - and F(0) - the membrane proton channel. F(1) has five subunits: alpha(3), beta(3), gamma(1), delta(1), epsilon(1). F(0) has three main subunits: a(1), b(2) and c(10-14). The alpha and beta chains form an alternating ring which encloses part of the gamma chain. F(1) is attached to F(0) by a central stalk formed by the gamma and epsilon chains, while a peripheral stalk is formed by the delta and b chains.</text>
</comment>
<comment type="subcellular location">
    <subcellularLocation>
        <location evidence="1">Cell inner membrane</location>
        <topology evidence="1">Single-pass membrane protein</topology>
    </subcellularLocation>
</comment>
<comment type="similarity">
    <text evidence="1">Belongs to the ATPase B chain family.</text>
</comment>